<organism>
    <name type="scientific">Mycobacterium tuberculosis (strain ATCC 25618 / H37Rv)</name>
    <dbReference type="NCBI Taxonomy" id="83332"/>
    <lineage>
        <taxon>Bacteria</taxon>
        <taxon>Bacillati</taxon>
        <taxon>Actinomycetota</taxon>
        <taxon>Actinomycetes</taxon>
        <taxon>Mycobacteriales</taxon>
        <taxon>Mycobacteriaceae</taxon>
        <taxon>Mycobacterium</taxon>
        <taxon>Mycobacterium tuberculosis complex</taxon>
    </lineage>
</organism>
<proteinExistence type="evidence at protein level"/>
<reference key="1">
    <citation type="journal article" date="1998" name="Nature">
        <title>Deciphering the biology of Mycobacterium tuberculosis from the complete genome sequence.</title>
        <authorList>
            <person name="Cole S.T."/>
            <person name="Brosch R."/>
            <person name="Parkhill J."/>
            <person name="Garnier T."/>
            <person name="Churcher C.M."/>
            <person name="Harris D.E."/>
            <person name="Gordon S.V."/>
            <person name="Eiglmeier K."/>
            <person name="Gas S."/>
            <person name="Barry C.E. III"/>
            <person name="Tekaia F."/>
            <person name="Badcock K."/>
            <person name="Basham D."/>
            <person name="Brown D."/>
            <person name="Chillingworth T."/>
            <person name="Connor R."/>
            <person name="Davies R.M."/>
            <person name="Devlin K."/>
            <person name="Feltwell T."/>
            <person name="Gentles S."/>
            <person name="Hamlin N."/>
            <person name="Holroyd S."/>
            <person name="Hornsby T."/>
            <person name="Jagels K."/>
            <person name="Krogh A."/>
            <person name="McLean J."/>
            <person name="Moule S."/>
            <person name="Murphy L.D."/>
            <person name="Oliver S."/>
            <person name="Osborne J."/>
            <person name="Quail M.A."/>
            <person name="Rajandream M.A."/>
            <person name="Rogers J."/>
            <person name="Rutter S."/>
            <person name="Seeger K."/>
            <person name="Skelton S."/>
            <person name="Squares S."/>
            <person name="Squares R."/>
            <person name="Sulston J.E."/>
            <person name="Taylor K."/>
            <person name="Whitehead S."/>
            <person name="Barrell B.G."/>
        </authorList>
    </citation>
    <scope>NUCLEOTIDE SEQUENCE [LARGE SCALE GENOMIC DNA]</scope>
    <source>
        <strain>ATCC 25618 / H37Rv</strain>
    </source>
</reference>
<reference key="2">
    <citation type="journal article" date="2011" name="Mol. Cell. Proteomics">
        <title>Proteogenomic analysis of Mycobacterium tuberculosis by high resolution mass spectrometry.</title>
        <authorList>
            <person name="Kelkar D.S."/>
            <person name="Kumar D."/>
            <person name="Kumar P."/>
            <person name="Balakrishnan L."/>
            <person name="Muthusamy B."/>
            <person name="Yadav A.K."/>
            <person name="Shrivastava P."/>
            <person name="Marimuthu A."/>
            <person name="Anand S."/>
            <person name="Sundaram H."/>
            <person name="Kingsbury R."/>
            <person name="Harsha H.C."/>
            <person name="Nair B."/>
            <person name="Prasad T.S."/>
            <person name="Chauhan D.S."/>
            <person name="Katoch K."/>
            <person name="Katoch V.M."/>
            <person name="Kumar P."/>
            <person name="Chaerkady R."/>
            <person name="Ramachandran S."/>
            <person name="Dash D."/>
            <person name="Pandey A."/>
        </authorList>
    </citation>
    <scope>IDENTIFICATION BY MASS SPECTROMETRY [LARGE SCALE ANALYSIS]</scope>
    <source>
        <strain>ATCC 25618 / H37Rv</strain>
    </source>
</reference>
<dbReference type="EC" id="4.3.2.10"/>
<dbReference type="EC" id="3.5.1.2"/>
<dbReference type="EMBL" id="AL123456">
    <property type="protein sequence ID" value="CCP44366.1"/>
    <property type="molecule type" value="Genomic_DNA"/>
</dbReference>
<dbReference type="PIR" id="D70544">
    <property type="entry name" value="D70544"/>
</dbReference>
<dbReference type="RefSeq" id="NP_216118.1">
    <property type="nucleotide sequence ID" value="NC_000962.3"/>
</dbReference>
<dbReference type="RefSeq" id="WP_003916835.1">
    <property type="nucleotide sequence ID" value="NZ_NVQJ01000016.1"/>
</dbReference>
<dbReference type="SMR" id="P9WMM1"/>
<dbReference type="FunCoup" id="P9WMM1">
    <property type="interactions" value="125"/>
</dbReference>
<dbReference type="STRING" id="83332.Rv1602"/>
<dbReference type="PaxDb" id="83332-Rv1602"/>
<dbReference type="DNASU" id="885529"/>
<dbReference type="GeneID" id="885529"/>
<dbReference type="KEGG" id="mtu:Rv1602"/>
<dbReference type="KEGG" id="mtv:RVBD_1602"/>
<dbReference type="TubercuList" id="Rv1602"/>
<dbReference type="eggNOG" id="COG0118">
    <property type="taxonomic scope" value="Bacteria"/>
</dbReference>
<dbReference type="InParanoid" id="P9WMM1"/>
<dbReference type="OrthoDB" id="9807137at2"/>
<dbReference type="PhylomeDB" id="P9WMM1"/>
<dbReference type="UniPathway" id="UPA00031">
    <property type="reaction ID" value="UER00010"/>
</dbReference>
<dbReference type="Proteomes" id="UP000001584">
    <property type="component" value="Chromosome"/>
</dbReference>
<dbReference type="GO" id="GO:0005737">
    <property type="term" value="C:cytoplasm"/>
    <property type="evidence" value="ECO:0007669"/>
    <property type="project" value="UniProtKB-SubCell"/>
</dbReference>
<dbReference type="GO" id="GO:0009274">
    <property type="term" value="C:peptidoglycan-based cell wall"/>
    <property type="evidence" value="ECO:0007005"/>
    <property type="project" value="MTBBASE"/>
</dbReference>
<dbReference type="GO" id="GO:0004359">
    <property type="term" value="F:glutaminase activity"/>
    <property type="evidence" value="ECO:0007669"/>
    <property type="project" value="UniProtKB-EC"/>
</dbReference>
<dbReference type="GO" id="GO:0000107">
    <property type="term" value="F:imidazoleglycerol-phosphate synthase activity"/>
    <property type="evidence" value="ECO:0000318"/>
    <property type="project" value="GO_Central"/>
</dbReference>
<dbReference type="GO" id="GO:0016829">
    <property type="term" value="F:lyase activity"/>
    <property type="evidence" value="ECO:0007669"/>
    <property type="project" value="UniProtKB-KW"/>
</dbReference>
<dbReference type="GO" id="GO:0000105">
    <property type="term" value="P:L-histidine biosynthetic process"/>
    <property type="evidence" value="ECO:0007669"/>
    <property type="project" value="UniProtKB-UniRule"/>
</dbReference>
<dbReference type="CDD" id="cd01748">
    <property type="entry name" value="GATase1_IGP_Synthase"/>
    <property type="match status" value="1"/>
</dbReference>
<dbReference type="FunFam" id="3.40.50.880:FF:000056">
    <property type="entry name" value="Imidazole glycerol phosphate synthase subunit HisH"/>
    <property type="match status" value="1"/>
</dbReference>
<dbReference type="Gene3D" id="3.40.50.880">
    <property type="match status" value="1"/>
</dbReference>
<dbReference type="HAMAP" id="MF_00278">
    <property type="entry name" value="HisH"/>
    <property type="match status" value="1"/>
</dbReference>
<dbReference type="InterPro" id="IPR029062">
    <property type="entry name" value="Class_I_gatase-like"/>
</dbReference>
<dbReference type="InterPro" id="IPR017926">
    <property type="entry name" value="GATASE"/>
</dbReference>
<dbReference type="InterPro" id="IPR010139">
    <property type="entry name" value="Imidazole-glycPsynth_HisH"/>
</dbReference>
<dbReference type="NCBIfam" id="TIGR01855">
    <property type="entry name" value="IMP_synth_hisH"/>
    <property type="match status" value="1"/>
</dbReference>
<dbReference type="PANTHER" id="PTHR42701">
    <property type="entry name" value="IMIDAZOLE GLYCEROL PHOSPHATE SYNTHASE SUBUNIT HISH"/>
    <property type="match status" value="1"/>
</dbReference>
<dbReference type="PANTHER" id="PTHR42701:SF1">
    <property type="entry name" value="IMIDAZOLE GLYCEROL PHOSPHATE SYNTHASE SUBUNIT HISH"/>
    <property type="match status" value="1"/>
</dbReference>
<dbReference type="Pfam" id="PF00117">
    <property type="entry name" value="GATase"/>
    <property type="match status" value="1"/>
</dbReference>
<dbReference type="PIRSF" id="PIRSF000495">
    <property type="entry name" value="Amidotransf_hisH"/>
    <property type="match status" value="1"/>
</dbReference>
<dbReference type="SUPFAM" id="SSF52317">
    <property type="entry name" value="Class I glutamine amidotransferase-like"/>
    <property type="match status" value="1"/>
</dbReference>
<dbReference type="PROSITE" id="PS51273">
    <property type="entry name" value="GATASE_TYPE_1"/>
    <property type="match status" value="1"/>
</dbReference>
<accession>P9WMM1</accession>
<accession>L0T767</accession>
<accession>O06589</accession>
<sequence>MTAKSVVVLDYGSGNLRSAQRALQRVGAEVEVTADTDAAMTADGLVVPGVGAFAACMAGLRKISGERIIAERVAAGRPVLGVCVGMQILFACGVEFGVQTPGCGHWPGAVIRLEAPVIPHMGWNVVDSAAGSALFKGLDVDARFYFVHSYAAQRWEGSPDALLTWATYRAPFLAAVEDGALAATQFHPEKSGDAGAAVLSSWVDGL</sequence>
<feature type="chain" id="PRO_0000152396" description="Imidazole glycerol phosphate synthase subunit HisH">
    <location>
        <begin position="1"/>
        <end position="206"/>
    </location>
</feature>
<feature type="domain" description="Glutamine amidotransferase type-1">
    <location>
        <begin position="5"/>
        <end position="206"/>
    </location>
</feature>
<feature type="active site" description="Nucleophile" evidence="1">
    <location>
        <position position="83"/>
    </location>
</feature>
<feature type="active site" evidence="1">
    <location>
        <position position="187"/>
    </location>
</feature>
<feature type="active site" evidence="1">
    <location>
        <position position="189"/>
    </location>
</feature>
<evidence type="ECO:0000250" key="1"/>
<protein>
    <recommendedName>
        <fullName>Imidazole glycerol phosphate synthase subunit HisH</fullName>
        <ecNumber>4.3.2.10</ecNumber>
    </recommendedName>
    <alternativeName>
        <fullName>IGP synthase glutaminase subunit</fullName>
        <ecNumber>3.5.1.2</ecNumber>
    </alternativeName>
    <alternativeName>
        <fullName>IGP synthase subunit HisH</fullName>
    </alternativeName>
    <alternativeName>
        <fullName>ImGP synthase subunit HisH</fullName>
        <shortName>IGPS subunit HisH</shortName>
    </alternativeName>
</protein>
<keyword id="KW-0028">Amino-acid biosynthesis</keyword>
<keyword id="KW-0963">Cytoplasm</keyword>
<keyword id="KW-0315">Glutamine amidotransferase</keyword>
<keyword id="KW-0368">Histidine biosynthesis</keyword>
<keyword id="KW-0378">Hydrolase</keyword>
<keyword id="KW-0456">Lyase</keyword>
<keyword id="KW-1185">Reference proteome</keyword>
<gene>
    <name type="primary">hisH</name>
    <name type="ordered locus">Rv1602</name>
    <name type="ORF">MTCY336.02c</name>
</gene>
<comment type="function">
    <text evidence="1">IGPS catalyzes the conversion of PRFAR and glutamine to IGP, AICAR and glutamate. The HisH subunit catalyzes the hydrolysis of glutamine to glutamate and ammonia as part of the synthesis of IGP and AICAR. The resulting ammonia molecule is channeled to the active site of HisF (By similarity).</text>
</comment>
<comment type="catalytic activity">
    <reaction>
        <text>5-[(5-phospho-1-deoxy-D-ribulos-1-ylimino)methylamino]-1-(5-phospho-beta-D-ribosyl)imidazole-4-carboxamide + L-glutamine = D-erythro-1-(imidazol-4-yl)glycerol 3-phosphate + 5-amino-1-(5-phospho-beta-D-ribosyl)imidazole-4-carboxamide + L-glutamate + H(+)</text>
        <dbReference type="Rhea" id="RHEA:24793"/>
        <dbReference type="ChEBI" id="CHEBI:15378"/>
        <dbReference type="ChEBI" id="CHEBI:29985"/>
        <dbReference type="ChEBI" id="CHEBI:58278"/>
        <dbReference type="ChEBI" id="CHEBI:58359"/>
        <dbReference type="ChEBI" id="CHEBI:58475"/>
        <dbReference type="ChEBI" id="CHEBI:58525"/>
        <dbReference type="EC" id="4.3.2.10"/>
    </reaction>
</comment>
<comment type="catalytic activity">
    <reaction>
        <text>L-glutamine + H2O = L-glutamate + NH4(+)</text>
        <dbReference type="Rhea" id="RHEA:15889"/>
        <dbReference type="ChEBI" id="CHEBI:15377"/>
        <dbReference type="ChEBI" id="CHEBI:28938"/>
        <dbReference type="ChEBI" id="CHEBI:29985"/>
        <dbReference type="ChEBI" id="CHEBI:58359"/>
        <dbReference type="EC" id="3.5.1.2"/>
    </reaction>
</comment>
<comment type="pathway">
    <text>Amino-acid biosynthesis; L-histidine biosynthesis; L-histidine from 5-phospho-alpha-D-ribose 1-diphosphate: step 5/9.</text>
</comment>
<comment type="subunit">
    <text evidence="1">Heterodimer of HisH and HisF.</text>
</comment>
<comment type="subcellular location">
    <subcellularLocation>
        <location evidence="1">Cytoplasm</location>
    </subcellularLocation>
</comment>
<name>HIS5_MYCTU</name>